<proteinExistence type="evidence at protein level"/>
<organism>
    <name type="scientific">Homo sapiens</name>
    <name type="common">Human</name>
    <dbReference type="NCBI Taxonomy" id="9606"/>
    <lineage>
        <taxon>Eukaryota</taxon>
        <taxon>Metazoa</taxon>
        <taxon>Chordata</taxon>
        <taxon>Craniata</taxon>
        <taxon>Vertebrata</taxon>
        <taxon>Euteleostomi</taxon>
        <taxon>Mammalia</taxon>
        <taxon>Eutheria</taxon>
        <taxon>Euarchontoglires</taxon>
        <taxon>Primates</taxon>
        <taxon>Haplorrhini</taxon>
        <taxon>Catarrhini</taxon>
        <taxon>Hominidae</taxon>
        <taxon>Homo</taxon>
    </lineage>
</organism>
<comment type="function">
    <text evidence="6 7 8 9">V region of the variable domain of immunoglobulin heavy chains that participates in the antigen recognition (PubMed:24600447). Immunoglobulins, also known as antibodies, are membrane-bound or secreted glycoproteins produced by B lymphocytes. In the recognition phase of humoral immunity, the membrane-bound immunoglobulins serve as receptors which, upon binding of a specific antigen, trigger the clonal expansion and differentiation of B lymphocytes into immunoglobulins-secreting plasma cells. Secreted immunoglobulins mediate the effector phase of humoral immunity, which results in the elimination of bound antigens (PubMed:20176268, PubMed:22158414). The antigen binding site is formed by the variable domain of one heavy chain, together with that of its associated light chain. Thus, each immunoglobulin has two antigen binding sites with remarkable affinity for a particular antigen. The variable domains are assembled by a process called V-(D)-J rearrangement and can then be subjected to somatic hypermutations which, after exposure to antigen and selection, allow affinity maturation for a particular antigen (PubMed:17576170, PubMed:20176268).</text>
</comment>
<comment type="subunit">
    <text evidence="7">Immunoglobulins are composed of two identical heavy chains and two identical light chains; disulfide-linked.</text>
</comment>
<comment type="subcellular location">
    <subcellularLocation>
        <location evidence="7 8">Secreted</location>
    </subcellularLocation>
    <subcellularLocation>
        <location evidence="7 8">Cell membrane</location>
    </subcellularLocation>
</comment>
<comment type="polymorphism">
    <text evidence="11">There are several alleles. The sequence shown is that of IMGT allele IGHV1-69D*01.</text>
</comment>
<comment type="caution">
    <text evidence="11">For examples of full-length immunoglobulin heavy chains (of different isotypes) see AC P0DOX2, AC P0DOX3, AC P0DOX4, AC P0DOX5 and AC P0DOX6.</text>
</comment>
<keyword id="KW-0002">3D-structure</keyword>
<keyword id="KW-1064">Adaptive immunity</keyword>
<keyword id="KW-1003">Cell membrane</keyword>
<keyword id="KW-1015">Disulfide bond</keyword>
<keyword id="KW-0391">Immunity</keyword>
<keyword id="KW-1280">Immunoglobulin</keyword>
<keyword id="KW-0393">Immunoglobulin domain</keyword>
<keyword id="KW-0472">Membrane</keyword>
<keyword id="KW-1267">Proteomics identification</keyword>
<keyword id="KW-0873">Pyrrolidone carboxylic acid</keyword>
<keyword id="KW-1185">Reference proteome</keyword>
<keyword id="KW-0964">Secreted</keyword>
<keyword id="KW-0732">Signal</keyword>
<feature type="signal peptide" evidence="3">
    <location>
        <begin position="1"/>
        <end position="19"/>
    </location>
</feature>
<feature type="chain" id="PRO_0000439568" description="Immunoglobulin heavy variable 1-69D" evidence="3">
    <location>
        <begin position="20"/>
        <end position="117"/>
    </location>
</feature>
<feature type="domain" description="Ig-like" evidence="4">
    <location>
        <begin position="20"/>
        <end position="117" status="greater than"/>
    </location>
</feature>
<feature type="region of interest" description="Framework-1" evidence="2">
    <location>
        <begin position="20"/>
        <end position="44"/>
    </location>
</feature>
<feature type="region of interest" description="Complementarity-determining-1" evidence="2">
    <location>
        <begin position="45"/>
        <end position="52"/>
    </location>
</feature>
<feature type="region of interest" description="Framework-2" evidence="2">
    <location>
        <begin position="53"/>
        <end position="69"/>
    </location>
</feature>
<feature type="region of interest" description="Complementarity-determining-2" evidence="2">
    <location>
        <begin position="70"/>
        <end position="77"/>
    </location>
</feature>
<feature type="region of interest" description="Framework-3" evidence="2">
    <location>
        <begin position="78"/>
        <end position="115"/>
    </location>
</feature>
<feature type="region of interest" description="Complementarity-determining-3" evidence="2">
    <location>
        <begin position="116"/>
        <end position="117" status="greater than"/>
    </location>
</feature>
<feature type="modified residue" description="Pyrrolidone carboxylic acid" evidence="1">
    <location>
        <position position="20"/>
    </location>
</feature>
<feature type="disulfide bond" evidence="4">
    <location>
        <begin position="41"/>
        <end position="115"/>
    </location>
</feature>
<feature type="non-terminal residue">
    <location>
        <position position="117"/>
    </location>
</feature>
<feature type="strand" evidence="12">
    <location>
        <begin position="22"/>
        <end position="25"/>
    </location>
</feature>
<feature type="strand" evidence="12">
    <location>
        <begin position="29"/>
        <end position="31"/>
    </location>
</feature>
<feature type="strand" evidence="12">
    <location>
        <begin position="37"/>
        <end position="45"/>
    </location>
</feature>
<feature type="strand" evidence="12">
    <location>
        <begin position="51"/>
        <end position="58"/>
    </location>
</feature>
<feature type="strand" evidence="12">
    <location>
        <begin position="64"/>
        <end position="70"/>
    </location>
</feature>
<feature type="turn" evidence="12">
    <location>
        <begin position="72"/>
        <end position="74"/>
    </location>
</feature>
<feature type="strand" evidence="12">
    <location>
        <begin position="77"/>
        <end position="79"/>
    </location>
</feature>
<feature type="helix" evidence="12">
    <location>
        <begin position="81"/>
        <end position="83"/>
    </location>
</feature>
<feature type="turn" evidence="12">
    <location>
        <begin position="84"/>
        <end position="86"/>
    </location>
</feature>
<feature type="strand" evidence="12">
    <location>
        <begin position="87"/>
        <end position="92"/>
    </location>
</feature>
<feature type="helix" evidence="12">
    <location>
        <begin position="93"/>
        <end position="95"/>
    </location>
</feature>
<feature type="strand" evidence="12">
    <location>
        <begin position="97"/>
        <end position="102"/>
    </location>
</feature>
<feature type="helix" evidence="12">
    <location>
        <begin position="107"/>
        <end position="109"/>
    </location>
</feature>
<feature type="strand" evidence="12">
    <location>
        <begin position="111"/>
        <end position="117"/>
    </location>
</feature>
<accession>A0A0B4J2H0</accession>
<sequence>MDWTWRFLFVVAAATGVQSQVQLVQSGAEVKKPGSSVKVSCKASGGTFSSYAISWVRQAPGQGLEWMGGIIPIFGTANYAQKFQGRVTITADESTSTAYMELSSLRSEDTAVYYCAR</sequence>
<reference key="1">
    <citation type="journal article" date="2003" name="Nature">
        <title>The DNA sequence and analysis of human chromosome 14.</title>
        <authorList>
            <person name="Heilig R."/>
            <person name="Eckenberg R."/>
            <person name="Petit J.-L."/>
            <person name="Fonknechten N."/>
            <person name="Da Silva C."/>
            <person name="Cattolico L."/>
            <person name="Levy M."/>
            <person name="Barbe V."/>
            <person name="De Berardinis V."/>
            <person name="Ureta-Vidal A."/>
            <person name="Pelletier E."/>
            <person name="Vico V."/>
            <person name="Anthouard V."/>
            <person name="Rowen L."/>
            <person name="Madan A."/>
            <person name="Qin S."/>
            <person name="Sun H."/>
            <person name="Du H."/>
            <person name="Pepin K."/>
            <person name="Artiguenave F."/>
            <person name="Robert C."/>
            <person name="Cruaud C."/>
            <person name="Bruels T."/>
            <person name="Jaillon O."/>
            <person name="Friedlander L."/>
            <person name="Samson G."/>
            <person name="Brottier P."/>
            <person name="Cure S."/>
            <person name="Segurens B."/>
            <person name="Aniere F."/>
            <person name="Samain S."/>
            <person name="Crespeau H."/>
            <person name="Abbasi N."/>
            <person name="Aiach N."/>
            <person name="Boscus D."/>
            <person name="Dickhoff R."/>
            <person name="Dors M."/>
            <person name="Dubois I."/>
            <person name="Friedman C."/>
            <person name="Gouyvenoux M."/>
            <person name="James R."/>
            <person name="Madan A."/>
            <person name="Mairey-Estrada B."/>
            <person name="Mangenot S."/>
            <person name="Martins N."/>
            <person name="Menard M."/>
            <person name="Oztas S."/>
            <person name="Ratcliffe A."/>
            <person name="Shaffer T."/>
            <person name="Trask B."/>
            <person name="Vacherie B."/>
            <person name="Bellemere C."/>
            <person name="Belser C."/>
            <person name="Besnard-Gonnet M."/>
            <person name="Bartol-Mavel D."/>
            <person name="Boutard M."/>
            <person name="Briez-Silla S."/>
            <person name="Combette S."/>
            <person name="Dufosse-Laurent V."/>
            <person name="Ferron C."/>
            <person name="Lechaplais C."/>
            <person name="Louesse C."/>
            <person name="Muselet D."/>
            <person name="Magdelenat G."/>
            <person name="Pateau E."/>
            <person name="Petit E."/>
            <person name="Sirvain-Trukniewicz P."/>
            <person name="Trybou A."/>
            <person name="Vega-Czarny N."/>
            <person name="Bataille E."/>
            <person name="Bluet E."/>
            <person name="Bordelais I."/>
            <person name="Dubois M."/>
            <person name="Dumont C."/>
            <person name="Guerin T."/>
            <person name="Haffray S."/>
            <person name="Hammadi R."/>
            <person name="Muanga J."/>
            <person name="Pellouin V."/>
            <person name="Robert D."/>
            <person name="Wunderle E."/>
            <person name="Gauguet G."/>
            <person name="Roy A."/>
            <person name="Sainte-Marthe L."/>
            <person name="Verdier J."/>
            <person name="Verdier-Discala C."/>
            <person name="Hillier L.W."/>
            <person name="Fulton L."/>
            <person name="McPherson J."/>
            <person name="Matsuda F."/>
            <person name="Wilson R."/>
            <person name="Scarpelli C."/>
            <person name="Gyapay G."/>
            <person name="Wincker P."/>
            <person name="Saurin W."/>
            <person name="Quetier F."/>
            <person name="Waterston R."/>
            <person name="Hood L."/>
            <person name="Weissenbach J."/>
        </authorList>
    </citation>
    <scope>NUCLEOTIDE SEQUENCE [LARGE SCALE GENOMIC DNA] (IMGT ALLELE IGHV1-69D*01)</scope>
</reference>
<reference key="2">
    <citation type="journal article" date="2001" name="Exp. Clin. Immunogenet.">
        <title>Nomenclature of the human immunoglobulin heavy (IGH) genes.</title>
        <authorList>
            <person name="Lefranc M.P."/>
        </authorList>
    </citation>
    <scope>NOMENCLATURE</scope>
</reference>
<reference key="3">
    <citation type="book" date="2001" name="The Immunoglobulin FactsBook.">
        <title>The Immunoglobulin FactsBook.</title>
        <editorList>
            <person name="Lefranc M.P."/>
            <person name="Lefranc G."/>
        </editorList>
        <authorList>
            <person name="Lefranc M.P."/>
            <person name="Lefranc G."/>
        </authorList>
    </citation>
    <scope>NOMENCLATURE</scope>
</reference>
<reference key="4">
    <citation type="journal article" date="2007" name="Annu. Rev. Genet.">
        <title>Immunoglobulin somatic hypermutation.</title>
        <authorList>
            <person name="Teng G."/>
            <person name="Papavasiliou F.N."/>
        </authorList>
    </citation>
    <scope>REVIEW ON SOMATIC HYPERMUTATION</scope>
</reference>
<reference key="5">
    <citation type="journal article" date="2010" name="J. Allergy Clin. Immunol.">
        <title>Structure and function of immunoglobulins.</title>
        <authorList>
            <person name="Schroeder H.W. Jr."/>
            <person name="Cavacini L."/>
        </authorList>
    </citation>
    <scope>REVIEW ON IMMUNOGLOBULINS</scope>
</reference>
<reference key="6">
    <citation type="journal article" date="2012" name="Nat. Rev. Immunol.">
        <title>Molecular programming of B cell memory.</title>
        <authorList>
            <person name="McHeyzer-Williams M."/>
            <person name="Okitsu S."/>
            <person name="Wang N."/>
            <person name="McHeyzer-Williams L."/>
        </authorList>
    </citation>
    <scope>REVIEW ON FUNCTION</scope>
</reference>
<reference key="7">
    <citation type="journal article" date="2014" name="Front. Immunol.">
        <title>Immunoglobulin and T Cell Receptor Genes: IMGT((R)) and the Birth and Rise of Immunoinformatics.</title>
        <authorList>
            <person name="Lefranc M.P."/>
        </authorList>
    </citation>
    <scope>NOMENCLATURE</scope>
</reference>
<dbReference type="EMBL" id="AC245369">
    <property type="status" value="NOT_ANNOTATED_CDS"/>
    <property type="molecule type" value="Genomic_DNA"/>
</dbReference>
<dbReference type="PDB" id="5C2B">
    <property type="method" value="X-ray"/>
    <property type="resolution" value="1.40 A"/>
    <property type="chains" value="H=20-117"/>
</dbReference>
<dbReference type="PDB" id="5C6W">
    <property type="method" value="X-ray"/>
    <property type="resolution" value="1.54 A"/>
    <property type="chains" value="H/J=20-117"/>
</dbReference>
<dbReference type="PDB" id="5CBA">
    <property type="method" value="X-ray"/>
    <property type="resolution" value="2.50 A"/>
    <property type="chains" value="A/C=20-117"/>
</dbReference>
<dbReference type="PDB" id="5CBE">
    <property type="method" value="X-ray"/>
    <property type="resolution" value="2.40 A"/>
    <property type="chains" value="A/C=20-117"/>
</dbReference>
<dbReference type="PDB" id="5WKZ">
    <property type="method" value="X-ray"/>
    <property type="resolution" value="1.85 A"/>
    <property type="chains" value="H=20-117"/>
</dbReference>
<dbReference type="PDBsum" id="5C2B"/>
<dbReference type="PDBsum" id="5C6W"/>
<dbReference type="PDBsum" id="5CBA"/>
<dbReference type="PDBsum" id="5CBE"/>
<dbReference type="PDBsum" id="5WKZ"/>
<dbReference type="EMDB" id="EMD-33550"/>
<dbReference type="EMDB" id="EMD-33551"/>
<dbReference type="EMDB" id="EMD-37249"/>
<dbReference type="SMR" id="A0A0B4J2H0"/>
<dbReference type="FunCoup" id="A0A0B4J2H0">
    <property type="interactions" value="285"/>
</dbReference>
<dbReference type="IMGT_GENE-DB" id="IGHV1-69D"/>
<dbReference type="BioMuta" id="HGNC:49601"/>
<dbReference type="jPOST" id="A0A0B4J2H0"/>
<dbReference type="MassIVE" id="A0A0B4J2H0"/>
<dbReference type="Ensembl" id="ENST00000624687.1">
    <property type="protein sequence ID" value="ENSP00000485152.1"/>
    <property type="gene ID" value="ENSG00000280411.1"/>
</dbReference>
<dbReference type="Ensembl" id="ENST00000633446.1">
    <property type="protein sequence ID" value="ENSP00000488097.1"/>
    <property type="gene ID" value="ENSG00000282399.1"/>
</dbReference>
<dbReference type="AGR" id="HGNC:49601"/>
<dbReference type="GeneCards" id="IGHV1-69D"/>
<dbReference type="HGNC" id="HGNC:49601">
    <property type="gene designation" value="IGHV1-69D"/>
</dbReference>
<dbReference type="HPA" id="ENSG00000280411">
    <property type="expression patterns" value="Tissue enhanced (lymphoid tissue, stomach)"/>
</dbReference>
<dbReference type="neXtProt" id="NX_A0A0B4J2H0"/>
<dbReference type="OpenTargets" id="ENSG00000280411"/>
<dbReference type="VEuPathDB" id="HostDB:ENSG00000280411"/>
<dbReference type="GeneTree" id="ENSGT00950000183013"/>
<dbReference type="HOGENOM" id="CLU_077975_5_2_1"/>
<dbReference type="InParanoid" id="A0A0B4J2H0"/>
<dbReference type="OMA" id="TTAYMEL"/>
<dbReference type="OrthoDB" id="9945861at2759"/>
<dbReference type="PAN-GO" id="A0A0B4J2H0">
    <property type="GO annotations" value="11 GO annotations based on evolutionary models"/>
</dbReference>
<dbReference type="ChiTaRS" id="IGHV1-69D">
    <property type="organism name" value="human"/>
</dbReference>
<dbReference type="EvolutionaryTrace" id="A0A0B4J2H0"/>
<dbReference type="Pharos" id="A0A0B4J2H0">
    <property type="development level" value="Tdark"/>
</dbReference>
<dbReference type="PRO" id="PR:A0A0B4J2H0"/>
<dbReference type="Proteomes" id="UP000005640">
    <property type="component" value="Chromosome 14"/>
</dbReference>
<dbReference type="RNAct" id="A0A0B4J2H0">
    <property type="molecule type" value="protein"/>
</dbReference>
<dbReference type="Bgee" id="ENSG00000280411">
    <property type="expression patterns" value="Expressed in vermiform appendix and 86 other cell types or tissues"/>
</dbReference>
<dbReference type="GO" id="GO:0005576">
    <property type="term" value="C:extracellular region"/>
    <property type="evidence" value="ECO:0007669"/>
    <property type="project" value="UniProtKB-SubCell"/>
</dbReference>
<dbReference type="GO" id="GO:0019814">
    <property type="term" value="C:immunoglobulin complex"/>
    <property type="evidence" value="ECO:0007669"/>
    <property type="project" value="UniProtKB-KW"/>
</dbReference>
<dbReference type="GO" id="GO:0005886">
    <property type="term" value="C:plasma membrane"/>
    <property type="evidence" value="ECO:0007669"/>
    <property type="project" value="UniProtKB-SubCell"/>
</dbReference>
<dbReference type="GO" id="GO:0003823">
    <property type="term" value="F:antigen binding"/>
    <property type="evidence" value="ECO:0000318"/>
    <property type="project" value="GO_Central"/>
</dbReference>
<dbReference type="GO" id="GO:0016064">
    <property type="term" value="P:immunoglobulin mediated immune response"/>
    <property type="evidence" value="ECO:0000318"/>
    <property type="project" value="GO_Central"/>
</dbReference>
<dbReference type="FunFam" id="2.60.40.10:FF:000556">
    <property type="entry name" value="Immunoglobulin heavy variable 7-81 (non-functional)"/>
    <property type="match status" value="1"/>
</dbReference>
<dbReference type="Gene3D" id="2.60.40.10">
    <property type="entry name" value="Immunoglobulins"/>
    <property type="match status" value="1"/>
</dbReference>
<dbReference type="InterPro" id="IPR007110">
    <property type="entry name" value="Ig-like_dom"/>
</dbReference>
<dbReference type="InterPro" id="IPR036179">
    <property type="entry name" value="Ig-like_dom_sf"/>
</dbReference>
<dbReference type="InterPro" id="IPR013783">
    <property type="entry name" value="Ig-like_fold"/>
</dbReference>
<dbReference type="InterPro" id="IPR013106">
    <property type="entry name" value="Ig_V-set"/>
</dbReference>
<dbReference type="InterPro" id="IPR050199">
    <property type="entry name" value="IgHV"/>
</dbReference>
<dbReference type="PANTHER" id="PTHR23266">
    <property type="entry name" value="IMMUNOGLOBULIN HEAVY CHAIN"/>
    <property type="match status" value="1"/>
</dbReference>
<dbReference type="Pfam" id="PF07686">
    <property type="entry name" value="V-set"/>
    <property type="match status" value="1"/>
</dbReference>
<dbReference type="SMART" id="SM00406">
    <property type="entry name" value="IGv"/>
    <property type="match status" value="1"/>
</dbReference>
<dbReference type="SUPFAM" id="SSF48726">
    <property type="entry name" value="Immunoglobulin"/>
    <property type="match status" value="1"/>
</dbReference>
<dbReference type="PROSITE" id="PS50835">
    <property type="entry name" value="IG_LIKE"/>
    <property type="match status" value="1"/>
</dbReference>
<protein>
    <recommendedName>
        <fullName evidence="5 10">Immunoglobulin heavy variable 1-69D</fullName>
    </recommendedName>
</protein>
<name>HV69D_HUMAN</name>
<gene>
    <name evidence="5 10" type="primary">IGHV1-69D</name>
</gene>
<evidence type="ECO:0000250" key="1">
    <source>
        <dbReference type="UniProtKB" id="P01742"/>
    </source>
</evidence>
<evidence type="ECO:0000250" key="2">
    <source>
        <dbReference type="UniProtKB" id="P23083"/>
    </source>
</evidence>
<evidence type="ECO:0000255" key="3"/>
<evidence type="ECO:0000255" key="4">
    <source>
        <dbReference type="PROSITE-ProRule" id="PRU00114"/>
    </source>
</evidence>
<evidence type="ECO:0000303" key="5">
    <source>
    </source>
</evidence>
<evidence type="ECO:0000303" key="6">
    <source>
    </source>
</evidence>
<evidence type="ECO:0000303" key="7">
    <source>
    </source>
</evidence>
<evidence type="ECO:0000303" key="8">
    <source>
    </source>
</evidence>
<evidence type="ECO:0000303" key="9">
    <source>
    </source>
</evidence>
<evidence type="ECO:0000303" key="10">
    <source ref="3"/>
</evidence>
<evidence type="ECO:0000305" key="11"/>
<evidence type="ECO:0007829" key="12">
    <source>
        <dbReference type="PDB" id="5C2B"/>
    </source>
</evidence>